<gene>
    <name type="ordered locus">MIMI_R325</name>
</gene>
<organismHost>
    <name type="scientific">Acanthamoeba polyphaga</name>
    <name type="common">Amoeba</name>
    <dbReference type="NCBI Taxonomy" id="5757"/>
</organismHost>
<feature type="signal peptide" evidence="1">
    <location>
        <begin position="1"/>
        <end position="30"/>
    </location>
</feature>
<feature type="chain" id="PRO_0000243963" description="Uncharacterized protein R325">
    <location>
        <begin position="31"/>
        <end position="197"/>
    </location>
</feature>
<organism>
    <name type="scientific">Acanthamoeba polyphaga mimivirus</name>
    <name type="common">APMV</name>
    <dbReference type="NCBI Taxonomy" id="212035"/>
    <lineage>
        <taxon>Viruses</taxon>
        <taxon>Varidnaviria</taxon>
        <taxon>Bamfordvirae</taxon>
        <taxon>Nucleocytoviricota</taxon>
        <taxon>Megaviricetes</taxon>
        <taxon>Imitervirales</taxon>
        <taxon>Mimiviridae</taxon>
        <taxon>Megamimivirinae</taxon>
        <taxon>Mimivirus</taxon>
        <taxon>Mimivirus bradfordmassiliense</taxon>
    </lineage>
</organism>
<dbReference type="EMBL" id="AY653733">
    <property type="protein sequence ID" value="AAV50594.1"/>
    <property type="molecule type" value="Genomic_DNA"/>
</dbReference>
<dbReference type="SMR" id="Q5UQR6"/>
<dbReference type="KEGG" id="vg:9924942"/>
<dbReference type="OrthoDB" id="17235at10239"/>
<dbReference type="Proteomes" id="UP000001134">
    <property type="component" value="Genome"/>
</dbReference>
<dbReference type="InterPro" id="IPR013536">
    <property type="entry name" value="WLM_dom"/>
</dbReference>
<dbReference type="Pfam" id="PF08325">
    <property type="entry name" value="WLM"/>
    <property type="match status" value="1"/>
</dbReference>
<keyword id="KW-1185">Reference proteome</keyword>
<keyword id="KW-0732">Signal</keyword>
<sequence length="197" mass="22781">MSTYIIINIALLIAIVALIFFLSKKTKSEASYVKSDITNKSYLVQNLPNKEEAAHILGIIDKRISILDDYLRENINKFTEYKPYIEQFNNRIKKLTLYENAPDGKYTSFTVDKGKEIALCLRSRKTGQIHDINLVMYVTLHELAHVACPETDHTELFKKIFIFLIKISIDLNIYKHIDYEADPAEYCGLVIDEDLLK</sequence>
<reference key="1">
    <citation type="journal article" date="2004" name="Science">
        <title>The 1.2-megabase genome sequence of Mimivirus.</title>
        <authorList>
            <person name="Raoult D."/>
            <person name="Audic S."/>
            <person name="Robert C."/>
            <person name="Abergel C."/>
            <person name="Renesto P."/>
            <person name="Ogata H."/>
            <person name="La Scola B."/>
            <person name="Susan M."/>
            <person name="Claverie J.-M."/>
        </authorList>
    </citation>
    <scope>NUCLEOTIDE SEQUENCE [LARGE SCALE GENOMIC DNA]</scope>
    <source>
        <strain>Rowbotham-Bradford</strain>
    </source>
</reference>
<evidence type="ECO:0000255" key="1"/>
<accession>Q5UQR6</accession>
<proteinExistence type="inferred from homology"/>
<protein>
    <recommendedName>
        <fullName>Uncharacterized protein R325</fullName>
    </recommendedName>
</protein>
<name>YR325_MIMIV</name>